<name>THII_CITK8</name>
<evidence type="ECO:0000255" key="1">
    <source>
        <dbReference type="HAMAP-Rule" id="MF_00021"/>
    </source>
</evidence>
<keyword id="KW-0067">ATP-binding</keyword>
<keyword id="KW-0963">Cytoplasm</keyword>
<keyword id="KW-1015">Disulfide bond</keyword>
<keyword id="KW-0547">Nucleotide-binding</keyword>
<keyword id="KW-0676">Redox-active center</keyword>
<keyword id="KW-1185">Reference proteome</keyword>
<keyword id="KW-0694">RNA-binding</keyword>
<keyword id="KW-0784">Thiamine biosynthesis</keyword>
<keyword id="KW-0808">Transferase</keyword>
<keyword id="KW-0820">tRNA-binding</keyword>
<proteinExistence type="inferred from homology"/>
<sequence>MKFIIKLFPEITIKSQSVRLRFIKILTGNIRNVLKHYDETLAVVRHWDNIEVRARDENQRLAIRDALTRIPGIHHILEVEDVPFTDMHDIFEKALVQYRDRLEGKTFCVRVKRRGKHEFSSIEVERYVGGGLNQHIESARVKLTNPDVTVHLEVEDDRLLLIKGRYEGIGGFPIGTQEDVLSLISGGFDSGVSSYMLMRRGCRVHYCFFNLGGAAHEIGVRQVAHYLWNRFGSSHRVRFVAINFEPVVGEILEKVDDGQMGVVLKRMMVRAASKVAERYGVQALVTGEALGQVSSQTLTNLRLIDNVSDTLILRPLISYDKEHIINLARQIGTEDFARTMPEYCGVISKSPTVKAIKAKIEAEEEHFDFSILDKVVEEASNVDIREIAQQTGQDVVEVETVSGFGPNDVILDIRSVDEQDDKPLKIEGVDVVSLPFYKLSTKFGDLDQSKTWLLWCERGVMSRLQALYLREQGFQNVKVYRP</sequence>
<feature type="chain" id="PRO_1000074211" description="tRNA sulfurtransferase">
    <location>
        <begin position="1"/>
        <end position="482"/>
    </location>
</feature>
<feature type="domain" description="THUMP" evidence="1">
    <location>
        <begin position="61"/>
        <end position="165"/>
    </location>
</feature>
<feature type="domain" description="Rhodanese" evidence="1">
    <location>
        <begin position="404"/>
        <end position="482"/>
    </location>
</feature>
<feature type="active site" description="Cysteine persulfide intermediate" evidence="1">
    <location>
        <position position="456"/>
    </location>
</feature>
<feature type="binding site" evidence="1">
    <location>
        <begin position="183"/>
        <end position="184"/>
    </location>
    <ligand>
        <name>ATP</name>
        <dbReference type="ChEBI" id="CHEBI:30616"/>
    </ligand>
</feature>
<feature type="binding site" evidence="1">
    <location>
        <position position="265"/>
    </location>
    <ligand>
        <name>ATP</name>
        <dbReference type="ChEBI" id="CHEBI:30616"/>
    </ligand>
</feature>
<feature type="binding site" evidence="1">
    <location>
        <position position="287"/>
    </location>
    <ligand>
        <name>ATP</name>
        <dbReference type="ChEBI" id="CHEBI:30616"/>
    </ligand>
</feature>
<feature type="binding site" evidence="1">
    <location>
        <position position="296"/>
    </location>
    <ligand>
        <name>ATP</name>
        <dbReference type="ChEBI" id="CHEBI:30616"/>
    </ligand>
</feature>
<feature type="disulfide bond" description="Redox-active" evidence="1">
    <location>
        <begin position="344"/>
        <end position="456"/>
    </location>
</feature>
<organism>
    <name type="scientific">Citrobacter koseri (strain ATCC BAA-895 / CDC 4225-83 / SGSC4696)</name>
    <dbReference type="NCBI Taxonomy" id="290338"/>
    <lineage>
        <taxon>Bacteria</taxon>
        <taxon>Pseudomonadati</taxon>
        <taxon>Pseudomonadota</taxon>
        <taxon>Gammaproteobacteria</taxon>
        <taxon>Enterobacterales</taxon>
        <taxon>Enterobacteriaceae</taxon>
        <taxon>Citrobacter</taxon>
    </lineage>
</organism>
<accession>A8AK31</accession>
<comment type="function">
    <text evidence="1">Catalyzes the ATP-dependent transfer of a sulfur to tRNA to produce 4-thiouridine in position 8 of tRNAs, which functions as a near-UV photosensor. Also catalyzes the transfer of sulfur to the sulfur carrier protein ThiS, forming ThiS-thiocarboxylate. This is a step in the synthesis of thiazole, in the thiamine biosynthesis pathway. The sulfur is donated as persulfide by IscS.</text>
</comment>
<comment type="catalytic activity">
    <reaction evidence="1">
        <text>[ThiI sulfur-carrier protein]-S-sulfanyl-L-cysteine + a uridine in tRNA + 2 reduced [2Fe-2S]-[ferredoxin] + ATP + H(+) = [ThiI sulfur-carrier protein]-L-cysteine + a 4-thiouridine in tRNA + 2 oxidized [2Fe-2S]-[ferredoxin] + AMP + diphosphate</text>
        <dbReference type="Rhea" id="RHEA:24176"/>
        <dbReference type="Rhea" id="RHEA-COMP:10000"/>
        <dbReference type="Rhea" id="RHEA-COMP:10001"/>
        <dbReference type="Rhea" id="RHEA-COMP:13337"/>
        <dbReference type="Rhea" id="RHEA-COMP:13338"/>
        <dbReference type="Rhea" id="RHEA-COMP:13339"/>
        <dbReference type="Rhea" id="RHEA-COMP:13340"/>
        <dbReference type="ChEBI" id="CHEBI:15378"/>
        <dbReference type="ChEBI" id="CHEBI:29950"/>
        <dbReference type="ChEBI" id="CHEBI:30616"/>
        <dbReference type="ChEBI" id="CHEBI:33019"/>
        <dbReference type="ChEBI" id="CHEBI:33737"/>
        <dbReference type="ChEBI" id="CHEBI:33738"/>
        <dbReference type="ChEBI" id="CHEBI:61963"/>
        <dbReference type="ChEBI" id="CHEBI:65315"/>
        <dbReference type="ChEBI" id="CHEBI:136798"/>
        <dbReference type="ChEBI" id="CHEBI:456215"/>
        <dbReference type="EC" id="2.8.1.4"/>
    </reaction>
</comment>
<comment type="catalytic activity">
    <reaction evidence="1">
        <text>[ThiS sulfur-carrier protein]-C-terminal Gly-Gly-AMP + S-sulfanyl-L-cysteinyl-[cysteine desulfurase] + AH2 = [ThiS sulfur-carrier protein]-C-terminal-Gly-aminoethanethioate + L-cysteinyl-[cysteine desulfurase] + A + AMP + 2 H(+)</text>
        <dbReference type="Rhea" id="RHEA:43340"/>
        <dbReference type="Rhea" id="RHEA-COMP:12157"/>
        <dbReference type="Rhea" id="RHEA-COMP:12158"/>
        <dbReference type="Rhea" id="RHEA-COMP:12910"/>
        <dbReference type="Rhea" id="RHEA-COMP:19908"/>
        <dbReference type="ChEBI" id="CHEBI:13193"/>
        <dbReference type="ChEBI" id="CHEBI:15378"/>
        <dbReference type="ChEBI" id="CHEBI:17499"/>
        <dbReference type="ChEBI" id="CHEBI:29950"/>
        <dbReference type="ChEBI" id="CHEBI:61963"/>
        <dbReference type="ChEBI" id="CHEBI:90618"/>
        <dbReference type="ChEBI" id="CHEBI:232372"/>
        <dbReference type="ChEBI" id="CHEBI:456215"/>
    </reaction>
</comment>
<comment type="pathway">
    <text evidence="1">Cofactor biosynthesis; thiamine diphosphate biosynthesis.</text>
</comment>
<comment type="subcellular location">
    <subcellularLocation>
        <location evidence="1">Cytoplasm</location>
    </subcellularLocation>
</comment>
<comment type="similarity">
    <text evidence="1">Belongs to the ThiI family.</text>
</comment>
<dbReference type="EC" id="2.8.1.4" evidence="1"/>
<dbReference type="EMBL" id="CP000822">
    <property type="protein sequence ID" value="ABV13844.1"/>
    <property type="molecule type" value="Genomic_DNA"/>
</dbReference>
<dbReference type="RefSeq" id="WP_012133559.1">
    <property type="nucleotide sequence ID" value="NC_009792.1"/>
</dbReference>
<dbReference type="SMR" id="A8AK31"/>
<dbReference type="STRING" id="290338.CKO_02738"/>
<dbReference type="GeneID" id="45136592"/>
<dbReference type="KEGG" id="cko:CKO_02738"/>
<dbReference type="HOGENOM" id="CLU_037952_4_1_6"/>
<dbReference type="OrthoDB" id="9773948at2"/>
<dbReference type="UniPathway" id="UPA00060"/>
<dbReference type="Proteomes" id="UP000008148">
    <property type="component" value="Chromosome"/>
</dbReference>
<dbReference type="GO" id="GO:0005829">
    <property type="term" value="C:cytosol"/>
    <property type="evidence" value="ECO:0007669"/>
    <property type="project" value="TreeGrafter"/>
</dbReference>
<dbReference type="GO" id="GO:0005524">
    <property type="term" value="F:ATP binding"/>
    <property type="evidence" value="ECO:0007669"/>
    <property type="project" value="UniProtKB-UniRule"/>
</dbReference>
<dbReference type="GO" id="GO:0004810">
    <property type="term" value="F:CCA tRNA nucleotidyltransferase activity"/>
    <property type="evidence" value="ECO:0007669"/>
    <property type="project" value="InterPro"/>
</dbReference>
<dbReference type="GO" id="GO:0000049">
    <property type="term" value="F:tRNA binding"/>
    <property type="evidence" value="ECO:0007669"/>
    <property type="project" value="UniProtKB-UniRule"/>
</dbReference>
<dbReference type="GO" id="GO:0140741">
    <property type="term" value="F:tRNA-uracil-4 sulfurtransferase activity"/>
    <property type="evidence" value="ECO:0007669"/>
    <property type="project" value="UniProtKB-EC"/>
</dbReference>
<dbReference type="GO" id="GO:0009228">
    <property type="term" value="P:thiamine biosynthetic process"/>
    <property type="evidence" value="ECO:0007669"/>
    <property type="project" value="UniProtKB-KW"/>
</dbReference>
<dbReference type="GO" id="GO:0009229">
    <property type="term" value="P:thiamine diphosphate biosynthetic process"/>
    <property type="evidence" value="ECO:0007669"/>
    <property type="project" value="UniProtKB-UniRule"/>
</dbReference>
<dbReference type="GO" id="GO:0052837">
    <property type="term" value="P:thiazole biosynthetic process"/>
    <property type="evidence" value="ECO:0007669"/>
    <property type="project" value="InterPro"/>
</dbReference>
<dbReference type="GO" id="GO:0002937">
    <property type="term" value="P:tRNA 4-thiouridine biosynthesis"/>
    <property type="evidence" value="ECO:0007669"/>
    <property type="project" value="TreeGrafter"/>
</dbReference>
<dbReference type="CDD" id="cd01712">
    <property type="entry name" value="PPase_ThiI"/>
    <property type="match status" value="1"/>
</dbReference>
<dbReference type="CDD" id="cd00158">
    <property type="entry name" value="RHOD"/>
    <property type="match status" value="1"/>
</dbReference>
<dbReference type="CDD" id="cd11716">
    <property type="entry name" value="THUMP_ThiI"/>
    <property type="match status" value="1"/>
</dbReference>
<dbReference type="FunFam" id="3.30.2130.30:FF:000002">
    <property type="entry name" value="tRNA sulfurtransferase"/>
    <property type="match status" value="1"/>
</dbReference>
<dbReference type="FunFam" id="3.40.250.10:FF:000003">
    <property type="entry name" value="tRNA sulfurtransferase"/>
    <property type="match status" value="1"/>
</dbReference>
<dbReference type="FunFam" id="3.40.50.620:FF:000029">
    <property type="entry name" value="tRNA sulfurtransferase"/>
    <property type="match status" value="1"/>
</dbReference>
<dbReference type="Gene3D" id="3.30.2130.30">
    <property type="match status" value="1"/>
</dbReference>
<dbReference type="Gene3D" id="3.40.50.620">
    <property type="entry name" value="HUPs"/>
    <property type="match status" value="1"/>
</dbReference>
<dbReference type="Gene3D" id="3.40.250.10">
    <property type="entry name" value="Rhodanese-like domain"/>
    <property type="match status" value="1"/>
</dbReference>
<dbReference type="HAMAP" id="MF_00021">
    <property type="entry name" value="ThiI"/>
    <property type="match status" value="1"/>
</dbReference>
<dbReference type="InterPro" id="IPR001763">
    <property type="entry name" value="Rhodanese-like_dom"/>
</dbReference>
<dbReference type="InterPro" id="IPR036873">
    <property type="entry name" value="Rhodanese-like_dom_sf"/>
</dbReference>
<dbReference type="InterPro" id="IPR014729">
    <property type="entry name" value="Rossmann-like_a/b/a_fold"/>
</dbReference>
<dbReference type="InterPro" id="IPR020536">
    <property type="entry name" value="ThiI_AANH"/>
</dbReference>
<dbReference type="InterPro" id="IPR054173">
    <property type="entry name" value="ThiI_fer"/>
</dbReference>
<dbReference type="InterPro" id="IPR049961">
    <property type="entry name" value="ThiI_N"/>
</dbReference>
<dbReference type="InterPro" id="IPR026340">
    <property type="entry name" value="THII_Thiazole_biosynth_dom"/>
</dbReference>
<dbReference type="InterPro" id="IPR004114">
    <property type="entry name" value="THUMP_dom"/>
</dbReference>
<dbReference type="InterPro" id="IPR049962">
    <property type="entry name" value="THUMP_ThiI"/>
</dbReference>
<dbReference type="InterPro" id="IPR003720">
    <property type="entry name" value="tRNA_STrfase"/>
</dbReference>
<dbReference type="InterPro" id="IPR050102">
    <property type="entry name" value="tRNA_sulfurtransferase_ThiI"/>
</dbReference>
<dbReference type="NCBIfam" id="TIGR04271">
    <property type="entry name" value="ThiI_C_thiazole"/>
    <property type="match status" value="1"/>
</dbReference>
<dbReference type="NCBIfam" id="TIGR00342">
    <property type="entry name" value="tRNA uracil 4-sulfurtransferase ThiI"/>
    <property type="match status" value="1"/>
</dbReference>
<dbReference type="PANTHER" id="PTHR43209">
    <property type="entry name" value="TRNA SULFURTRANSFERASE"/>
    <property type="match status" value="1"/>
</dbReference>
<dbReference type="PANTHER" id="PTHR43209:SF1">
    <property type="entry name" value="TRNA SULFURTRANSFERASE"/>
    <property type="match status" value="1"/>
</dbReference>
<dbReference type="Pfam" id="PF02568">
    <property type="entry name" value="ThiI"/>
    <property type="match status" value="1"/>
</dbReference>
<dbReference type="Pfam" id="PF22025">
    <property type="entry name" value="ThiI_fer"/>
    <property type="match status" value="1"/>
</dbReference>
<dbReference type="Pfam" id="PF02926">
    <property type="entry name" value="THUMP"/>
    <property type="match status" value="1"/>
</dbReference>
<dbReference type="SMART" id="SM00981">
    <property type="entry name" value="THUMP"/>
    <property type="match status" value="1"/>
</dbReference>
<dbReference type="SUPFAM" id="SSF52402">
    <property type="entry name" value="Adenine nucleotide alpha hydrolases-like"/>
    <property type="match status" value="1"/>
</dbReference>
<dbReference type="SUPFAM" id="SSF52821">
    <property type="entry name" value="Rhodanese/Cell cycle control phosphatase"/>
    <property type="match status" value="1"/>
</dbReference>
<dbReference type="SUPFAM" id="SSF143437">
    <property type="entry name" value="THUMP domain-like"/>
    <property type="match status" value="1"/>
</dbReference>
<dbReference type="PROSITE" id="PS50206">
    <property type="entry name" value="RHODANESE_3"/>
    <property type="match status" value="1"/>
</dbReference>
<dbReference type="PROSITE" id="PS51165">
    <property type="entry name" value="THUMP"/>
    <property type="match status" value="1"/>
</dbReference>
<protein>
    <recommendedName>
        <fullName evidence="1">tRNA sulfurtransferase</fullName>
        <ecNumber evidence="1">2.8.1.4</ecNumber>
    </recommendedName>
    <alternativeName>
        <fullName evidence="1">Sulfur carrier protein ThiS sulfurtransferase</fullName>
    </alternativeName>
    <alternativeName>
        <fullName evidence="1">Thiamine biosynthesis protein ThiI</fullName>
    </alternativeName>
    <alternativeName>
        <fullName evidence="1">tRNA 4-thiouridine synthase</fullName>
    </alternativeName>
</protein>
<reference key="1">
    <citation type="submission" date="2007-08" db="EMBL/GenBank/DDBJ databases">
        <authorList>
            <consortium name="The Citrobacter koseri Genome Sequencing Project"/>
            <person name="McClelland M."/>
            <person name="Sanderson E.K."/>
            <person name="Porwollik S."/>
            <person name="Spieth J."/>
            <person name="Clifton W.S."/>
            <person name="Latreille P."/>
            <person name="Courtney L."/>
            <person name="Wang C."/>
            <person name="Pepin K."/>
            <person name="Bhonagiri V."/>
            <person name="Nash W."/>
            <person name="Johnson M."/>
            <person name="Thiruvilangam P."/>
            <person name="Wilson R."/>
        </authorList>
    </citation>
    <scope>NUCLEOTIDE SEQUENCE [LARGE SCALE GENOMIC DNA]</scope>
    <source>
        <strain>ATCC BAA-895 / CDC 4225-83 / SGSC4696</strain>
    </source>
</reference>
<gene>
    <name evidence="1" type="primary">thiI</name>
    <name type="ordered locus">CKO_02738</name>
</gene>